<organism>
    <name type="scientific">Borrelia hermsii (strain HS1 / DAH)</name>
    <dbReference type="NCBI Taxonomy" id="314723"/>
    <lineage>
        <taxon>Bacteria</taxon>
        <taxon>Pseudomonadati</taxon>
        <taxon>Spirochaetota</taxon>
        <taxon>Spirochaetia</taxon>
        <taxon>Spirochaetales</taxon>
        <taxon>Borreliaceae</taxon>
        <taxon>Borrelia</taxon>
    </lineage>
</organism>
<reference key="1">
    <citation type="submission" date="2004-12" db="EMBL/GenBank/DDBJ databases">
        <title>The genome sequence of Borrelia hermsii and Borrelia turicatae: comparative analysis of two agents of endemic N. America relapsing fever.</title>
        <authorList>
            <person name="Porcella S.F."/>
            <person name="Raffel S.J."/>
            <person name="Schrumpf M.E."/>
            <person name="Montgomery B."/>
            <person name="Smith T."/>
            <person name="Schwan T.G."/>
        </authorList>
    </citation>
    <scope>NUCLEOTIDE SEQUENCE [LARGE SCALE GENOMIC DNA]</scope>
    <source>
        <strain>HS1 / DAH</strain>
    </source>
</reference>
<keyword id="KW-0687">Ribonucleoprotein</keyword>
<keyword id="KW-0689">Ribosomal protein</keyword>
<keyword id="KW-0694">RNA-binding</keyword>
<keyword id="KW-0699">rRNA-binding</keyword>
<feature type="chain" id="PRO_1000143947" description="Large ribosomal subunit protein uL6">
    <location>
        <begin position="1"/>
        <end position="180"/>
    </location>
</feature>
<protein>
    <recommendedName>
        <fullName evidence="1">Large ribosomal subunit protein uL6</fullName>
    </recommendedName>
    <alternativeName>
        <fullName evidence="2">50S ribosomal protein L6</fullName>
    </alternativeName>
</protein>
<dbReference type="EMBL" id="CP000048">
    <property type="protein sequence ID" value="AAX17002.1"/>
    <property type="molecule type" value="Genomic_DNA"/>
</dbReference>
<dbReference type="RefSeq" id="WP_012422255.1">
    <property type="nucleotide sequence ID" value="NZ_CP073136.1"/>
</dbReference>
<dbReference type="SMR" id="B2S0J6"/>
<dbReference type="KEGG" id="bhr:BH0493"/>
<dbReference type="HOGENOM" id="CLU_065464_1_2_12"/>
<dbReference type="Proteomes" id="UP000008834">
    <property type="component" value="Chromosome"/>
</dbReference>
<dbReference type="GO" id="GO:0022625">
    <property type="term" value="C:cytosolic large ribosomal subunit"/>
    <property type="evidence" value="ECO:0007669"/>
    <property type="project" value="TreeGrafter"/>
</dbReference>
<dbReference type="GO" id="GO:0019843">
    <property type="term" value="F:rRNA binding"/>
    <property type="evidence" value="ECO:0007669"/>
    <property type="project" value="UniProtKB-UniRule"/>
</dbReference>
<dbReference type="GO" id="GO:0003735">
    <property type="term" value="F:structural constituent of ribosome"/>
    <property type="evidence" value="ECO:0007669"/>
    <property type="project" value="InterPro"/>
</dbReference>
<dbReference type="GO" id="GO:0002181">
    <property type="term" value="P:cytoplasmic translation"/>
    <property type="evidence" value="ECO:0007669"/>
    <property type="project" value="TreeGrafter"/>
</dbReference>
<dbReference type="FunFam" id="3.90.930.12:FF:000002">
    <property type="entry name" value="50S ribosomal protein L6"/>
    <property type="match status" value="1"/>
</dbReference>
<dbReference type="Gene3D" id="3.90.930.12">
    <property type="entry name" value="Ribosomal protein L6, alpha-beta domain"/>
    <property type="match status" value="2"/>
</dbReference>
<dbReference type="HAMAP" id="MF_01365_B">
    <property type="entry name" value="Ribosomal_uL6_B"/>
    <property type="match status" value="1"/>
</dbReference>
<dbReference type="InterPro" id="IPR000702">
    <property type="entry name" value="Ribosomal_uL6-like"/>
</dbReference>
<dbReference type="InterPro" id="IPR036789">
    <property type="entry name" value="Ribosomal_uL6-like_a/b-dom_sf"/>
</dbReference>
<dbReference type="InterPro" id="IPR020040">
    <property type="entry name" value="Ribosomal_uL6_a/b-dom"/>
</dbReference>
<dbReference type="InterPro" id="IPR019906">
    <property type="entry name" value="Ribosomal_uL6_bac-type"/>
</dbReference>
<dbReference type="InterPro" id="IPR002358">
    <property type="entry name" value="Ribosomal_uL6_CS"/>
</dbReference>
<dbReference type="NCBIfam" id="TIGR03654">
    <property type="entry name" value="L6_bact"/>
    <property type="match status" value="1"/>
</dbReference>
<dbReference type="PANTHER" id="PTHR11655">
    <property type="entry name" value="60S/50S RIBOSOMAL PROTEIN L6/L9"/>
    <property type="match status" value="1"/>
</dbReference>
<dbReference type="PANTHER" id="PTHR11655:SF14">
    <property type="entry name" value="LARGE RIBOSOMAL SUBUNIT PROTEIN UL6M"/>
    <property type="match status" value="1"/>
</dbReference>
<dbReference type="Pfam" id="PF00347">
    <property type="entry name" value="Ribosomal_L6"/>
    <property type="match status" value="2"/>
</dbReference>
<dbReference type="PIRSF" id="PIRSF002162">
    <property type="entry name" value="Ribosomal_L6"/>
    <property type="match status" value="1"/>
</dbReference>
<dbReference type="PRINTS" id="PR00059">
    <property type="entry name" value="RIBOSOMALL6"/>
</dbReference>
<dbReference type="SUPFAM" id="SSF56053">
    <property type="entry name" value="Ribosomal protein L6"/>
    <property type="match status" value="2"/>
</dbReference>
<dbReference type="PROSITE" id="PS00525">
    <property type="entry name" value="RIBOSOMAL_L6_1"/>
    <property type="match status" value="1"/>
</dbReference>
<name>RL6_BORHD</name>
<accession>B2S0J6</accession>
<evidence type="ECO:0000255" key="1">
    <source>
        <dbReference type="HAMAP-Rule" id="MF_01365"/>
    </source>
</evidence>
<evidence type="ECO:0000305" key="2"/>
<comment type="function">
    <text evidence="1">This protein binds to the 23S rRNA, and is important in its secondary structure. It is located near the subunit interface in the base of the L7/L12 stalk, and near the tRNA binding site of the peptidyltransferase center.</text>
</comment>
<comment type="subunit">
    <text evidence="1">Part of the 50S ribosomal subunit.</text>
</comment>
<comment type="similarity">
    <text evidence="1">Belongs to the universal ribosomal protein uL6 family.</text>
</comment>
<proteinExistence type="inferred from homology"/>
<sequence length="180" mass="20191">MSRIGKLPIKIVDSVKVDINDNIVTVEGKRGKLSQEINSRIRVRVEDSNIIVERSLDDKQTRAFHGLYRSLIFNMVKGVSDGFSKSLTINGIGYRVEQQGTSLFFNLGYSTQFEYVIPEGVNIRLEGNTKIAVEGIDKCRVGQVAAEIRSLRVPEPYKGKGIRYDNEVSRRKVGKSGVKK</sequence>
<gene>
    <name evidence="1" type="primary">rplF</name>
    <name type="ordered locus">BH0493</name>
</gene>